<evidence type="ECO:0000250" key="1">
    <source>
        <dbReference type="UniProtKB" id="Q8CTG7"/>
    </source>
</evidence>
<evidence type="ECO:0000250" key="2">
    <source>
        <dbReference type="UniProtKB" id="Q97JQ5"/>
    </source>
</evidence>
<evidence type="ECO:0000305" key="3"/>
<protein>
    <recommendedName>
        <fullName>Putative 5'(3')-deoxyribonucleotidase</fullName>
        <ecNumber>3.1.3.-</ecNumber>
    </recommendedName>
</protein>
<dbReference type="EC" id="3.1.3.-"/>
<dbReference type="EMBL" id="BX571856">
    <property type="protein sequence ID" value="CAG39788.1"/>
    <property type="molecule type" value="Genomic_DNA"/>
</dbReference>
<dbReference type="RefSeq" id="WP_000197262.1">
    <property type="nucleotide sequence ID" value="NC_002952.2"/>
</dbReference>
<dbReference type="SMR" id="Q6GIR7"/>
<dbReference type="KEGG" id="sar:SAR0778"/>
<dbReference type="HOGENOM" id="CLU_111510_0_0_9"/>
<dbReference type="Proteomes" id="UP000000596">
    <property type="component" value="Chromosome"/>
</dbReference>
<dbReference type="GO" id="GO:0008253">
    <property type="term" value="F:5'-nucleotidase activity"/>
    <property type="evidence" value="ECO:0007669"/>
    <property type="project" value="InterPro"/>
</dbReference>
<dbReference type="GO" id="GO:0046872">
    <property type="term" value="F:metal ion binding"/>
    <property type="evidence" value="ECO:0007669"/>
    <property type="project" value="UniProtKB-KW"/>
</dbReference>
<dbReference type="GO" id="GO:0009223">
    <property type="term" value="P:pyrimidine deoxyribonucleotide catabolic process"/>
    <property type="evidence" value="ECO:0007669"/>
    <property type="project" value="TreeGrafter"/>
</dbReference>
<dbReference type="Gene3D" id="1.10.40.40">
    <property type="entry name" value="Deoxyribonucleotidase, domain 2"/>
    <property type="match status" value="1"/>
</dbReference>
<dbReference type="Gene3D" id="3.40.50.1000">
    <property type="entry name" value="HAD superfamily/HAD-like"/>
    <property type="match status" value="1"/>
</dbReference>
<dbReference type="InterPro" id="IPR010708">
    <property type="entry name" value="5'(3')-deoxyribonucleotidase"/>
</dbReference>
<dbReference type="InterPro" id="IPR036412">
    <property type="entry name" value="HAD-like_sf"/>
</dbReference>
<dbReference type="InterPro" id="IPR023214">
    <property type="entry name" value="HAD_sf"/>
</dbReference>
<dbReference type="PANTHER" id="PTHR16504">
    <property type="entry name" value="5'(3')-DEOXYRIBONUCLEOTIDASE"/>
    <property type="match status" value="1"/>
</dbReference>
<dbReference type="PANTHER" id="PTHR16504:SF4">
    <property type="entry name" value="5'(3')-DEOXYRIBONUCLEOTIDASE"/>
    <property type="match status" value="1"/>
</dbReference>
<dbReference type="Pfam" id="PF06941">
    <property type="entry name" value="NT5C"/>
    <property type="match status" value="1"/>
</dbReference>
<dbReference type="SFLD" id="SFLDG01146">
    <property type="entry name" value="C1.2.2"/>
    <property type="match status" value="1"/>
</dbReference>
<dbReference type="SFLD" id="SFLDS00003">
    <property type="entry name" value="Haloacid_Dehalogenase"/>
    <property type="match status" value="1"/>
</dbReference>
<dbReference type="SUPFAM" id="SSF56784">
    <property type="entry name" value="HAD-like"/>
    <property type="match status" value="1"/>
</dbReference>
<accession>Q6GIR7</accession>
<organism>
    <name type="scientific">Staphylococcus aureus (strain MRSA252)</name>
    <dbReference type="NCBI Taxonomy" id="282458"/>
    <lineage>
        <taxon>Bacteria</taxon>
        <taxon>Bacillati</taxon>
        <taxon>Bacillota</taxon>
        <taxon>Bacilli</taxon>
        <taxon>Bacillales</taxon>
        <taxon>Staphylococcaceae</taxon>
        <taxon>Staphylococcus</taxon>
    </lineage>
</organism>
<name>53DR_STAAR</name>
<keyword id="KW-0378">Hydrolase</keyword>
<keyword id="KW-0460">Magnesium</keyword>
<keyword id="KW-0479">Metal-binding</keyword>
<proteinExistence type="inferred from homology"/>
<sequence length="180" mass="20961">MTRKSIAIDMDEVLADTLGEIIDAVNFRADLGIKMEALNGQKLKHVIPEHDGLITEVLREPGFFRHLKVMPHAQEVVKKLTEHYDVYIATAAMDVPTSFSDKYEWLLEFFPFLDPQHFVFCGRKNIVKADYLIDDNPRQLEIFTGTPIMFTAVHNINDDRFERVNSWKDVEQYFLDNIEK</sequence>
<comment type="function">
    <text evidence="3">Dephosphorylates the 5' and 2'(3')-phosphates of deoxyribonucleotides.</text>
</comment>
<comment type="cofactor">
    <cofactor evidence="2">
        <name>Mg(2+)</name>
        <dbReference type="ChEBI" id="CHEBI:18420"/>
    </cofactor>
</comment>
<comment type="similarity">
    <text evidence="3">Belongs to the 5'(3')-deoxyribonucleotidase family.</text>
</comment>
<gene>
    <name type="ordered locus">SAR0778</name>
</gene>
<feature type="chain" id="PRO_0000164383" description="Putative 5'(3')-deoxyribonucleotidase">
    <location>
        <begin position="1"/>
        <end position="180"/>
    </location>
</feature>
<feature type="active site" description="Nucleophile" evidence="3">
    <location>
        <position position="9"/>
    </location>
</feature>
<feature type="active site" description="Proton donor" evidence="3">
    <location>
        <position position="11"/>
    </location>
</feature>
<feature type="binding site" evidence="1">
    <location>
        <position position="9"/>
    </location>
    <ligand>
        <name>Mg(2+)</name>
        <dbReference type="ChEBI" id="CHEBI:18420"/>
    </ligand>
</feature>
<feature type="binding site" evidence="1">
    <location>
        <position position="11"/>
    </location>
    <ligand>
        <name>Mg(2+)</name>
        <dbReference type="ChEBI" id="CHEBI:18420"/>
    </ligand>
</feature>
<feature type="binding site" evidence="1">
    <location>
        <position position="135"/>
    </location>
    <ligand>
        <name>Mg(2+)</name>
        <dbReference type="ChEBI" id="CHEBI:18420"/>
    </ligand>
</feature>
<reference key="1">
    <citation type="journal article" date="2004" name="Proc. Natl. Acad. Sci. U.S.A.">
        <title>Complete genomes of two clinical Staphylococcus aureus strains: evidence for the rapid evolution of virulence and drug resistance.</title>
        <authorList>
            <person name="Holden M.T.G."/>
            <person name="Feil E.J."/>
            <person name="Lindsay J.A."/>
            <person name="Peacock S.J."/>
            <person name="Day N.P.J."/>
            <person name="Enright M.C."/>
            <person name="Foster T.J."/>
            <person name="Moore C.E."/>
            <person name="Hurst L."/>
            <person name="Atkin R."/>
            <person name="Barron A."/>
            <person name="Bason N."/>
            <person name="Bentley S.D."/>
            <person name="Chillingworth C."/>
            <person name="Chillingworth T."/>
            <person name="Churcher C."/>
            <person name="Clark L."/>
            <person name="Corton C."/>
            <person name="Cronin A."/>
            <person name="Doggett J."/>
            <person name="Dowd L."/>
            <person name="Feltwell T."/>
            <person name="Hance Z."/>
            <person name="Harris B."/>
            <person name="Hauser H."/>
            <person name="Holroyd S."/>
            <person name="Jagels K."/>
            <person name="James K.D."/>
            <person name="Lennard N."/>
            <person name="Line A."/>
            <person name="Mayes R."/>
            <person name="Moule S."/>
            <person name="Mungall K."/>
            <person name="Ormond D."/>
            <person name="Quail M.A."/>
            <person name="Rabbinowitsch E."/>
            <person name="Rutherford K.M."/>
            <person name="Sanders M."/>
            <person name="Sharp S."/>
            <person name="Simmonds M."/>
            <person name="Stevens K."/>
            <person name="Whitehead S."/>
            <person name="Barrell B.G."/>
            <person name="Spratt B.G."/>
            <person name="Parkhill J."/>
        </authorList>
    </citation>
    <scope>NUCLEOTIDE SEQUENCE [LARGE SCALE GENOMIC DNA]</scope>
    <source>
        <strain>MRSA252</strain>
    </source>
</reference>